<reference key="1">
    <citation type="submission" date="2006-03" db="EMBL/GenBank/DDBJ databases">
        <title>Complete sequence of chromosome of Nitrobacter hamburgensis X14.</title>
        <authorList>
            <consortium name="US DOE Joint Genome Institute"/>
            <person name="Copeland A."/>
            <person name="Lucas S."/>
            <person name="Lapidus A."/>
            <person name="Barry K."/>
            <person name="Detter J.C."/>
            <person name="Glavina del Rio T."/>
            <person name="Hammon N."/>
            <person name="Israni S."/>
            <person name="Dalin E."/>
            <person name="Tice H."/>
            <person name="Pitluck S."/>
            <person name="Chain P."/>
            <person name="Malfatti S."/>
            <person name="Shin M."/>
            <person name="Vergez L."/>
            <person name="Schmutz J."/>
            <person name="Larimer F."/>
            <person name="Land M."/>
            <person name="Hauser L."/>
            <person name="Kyrpides N."/>
            <person name="Ivanova N."/>
            <person name="Ward B."/>
            <person name="Arp D."/>
            <person name="Klotz M."/>
            <person name="Stein L."/>
            <person name="O'Mullan G."/>
            <person name="Starkenburg S."/>
            <person name="Sayavedra L."/>
            <person name="Poret-Peterson A.T."/>
            <person name="Gentry M.E."/>
            <person name="Bruce D."/>
            <person name="Richardson P."/>
        </authorList>
    </citation>
    <scope>NUCLEOTIDE SEQUENCE [LARGE SCALE GENOMIC DNA]</scope>
    <source>
        <strain>DSM 10229 / NCIMB 13809 / X14</strain>
    </source>
</reference>
<feature type="chain" id="PRO_1000018077" description="Arginine--tRNA ligase">
    <location>
        <begin position="1"/>
        <end position="597"/>
    </location>
</feature>
<feature type="short sequence motif" description="'HIGH' region">
    <location>
        <begin position="138"/>
        <end position="148"/>
    </location>
</feature>
<keyword id="KW-0030">Aminoacyl-tRNA synthetase</keyword>
<keyword id="KW-0067">ATP-binding</keyword>
<keyword id="KW-0963">Cytoplasm</keyword>
<keyword id="KW-0436">Ligase</keyword>
<keyword id="KW-0547">Nucleotide-binding</keyword>
<keyword id="KW-0648">Protein biosynthesis</keyword>
<keyword id="KW-1185">Reference proteome</keyword>
<accession>Q1QMH5</accession>
<evidence type="ECO:0000255" key="1">
    <source>
        <dbReference type="HAMAP-Rule" id="MF_00123"/>
    </source>
</evidence>
<dbReference type="EC" id="6.1.1.19" evidence="1"/>
<dbReference type="EMBL" id="CP000319">
    <property type="protein sequence ID" value="ABE62572.1"/>
    <property type="molecule type" value="Genomic_DNA"/>
</dbReference>
<dbReference type="RefSeq" id="WP_011510254.1">
    <property type="nucleotide sequence ID" value="NC_007964.1"/>
</dbReference>
<dbReference type="SMR" id="Q1QMH5"/>
<dbReference type="STRING" id="323097.Nham_1758"/>
<dbReference type="KEGG" id="nha:Nham_1758"/>
<dbReference type="eggNOG" id="COG0018">
    <property type="taxonomic scope" value="Bacteria"/>
</dbReference>
<dbReference type="HOGENOM" id="CLU_006406_0_1_5"/>
<dbReference type="OrthoDB" id="9803211at2"/>
<dbReference type="Proteomes" id="UP000001953">
    <property type="component" value="Chromosome"/>
</dbReference>
<dbReference type="GO" id="GO:0005737">
    <property type="term" value="C:cytoplasm"/>
    <property type="evidence" value="ECO:0007669"/>
    <property type="project" value="UniProtKB-SubCell"/>
</dbReference>
<dbReference type="GO" id="GO:0004814">
    <property type="term" value="F:arginine-tRNA ligase activity"/>
    <property type="evidence" value="ECO:0007669"/>
    <property type="project" value="UniProtKB-UniRule"/>
</dbReference>
<dbReference type="GO" id="GO:0005524">
    <property type="term" value="F:ATP binding"/>
    <property type="evidence" value="ECO:0007669"/>
    <property type="project" value="UniProtKB-UniRule"/>
</dbReference>
<dbReference type="GO" id="GO:0006420">
    <property type="term" value="P:arginyl-tRNA aminoacylation"/>
    <property type="evidence" value="ECO:0007669"/>
    <property type="project" value="UniProtKB-UniRule"/>
</dbReference>
<dbReference type="CDD" id="cd00671">
    <property type="entry name" value="ArgRS_core"/>
    <property type="match status" value="1"/>
</dbReference>
<dbReference type="FunFam" id="1.10.730.10:FF:000008">
    <property type="entry name" value="Arginine--tRNA ligase"/>
    <property type="match status" value="1"/>
</dbReference>
<dbReference type="FunFam" id="3.40.50.620:FF:000062">
    <property type="entry name" value="Arginine--tRNA ligase"/>
    <property type="match status" value="1"/>
</dbReference>
<dbReference type="Gene3D" id="3.30.1360.70">
    <property type="entry name" value="Arginyl tRNA synthetase N-terminal domain"/>
    <property type="match status" value="1"/>
</dbReference>
<dbReference type="Gene3D" id="3.40.50.620">
    <property type="entry name" value="HUPs"/>
    <property type="match status" value="1"/>
</dbReference>
<dbReference type="Gene3D" id="1.10.730.10">
    <property type="entry name" value="Isoleucyl-tRNA Synthetase, Domain 1"/>
    <property type="match status" value="1"/>
</dbReference>
<dbReference type="HAMAP" id="MF_00123">
    <property type="entry name" value="Arg_tRNA_synth"/>
    <property type="match status" value="1"/>
</dbReference>
<dbReference type="InterPro" id="IPR001412">
    <property type="entry name" value="aa-tRNA-synth_I_CS"/>
</dbReference>
<dbReference type="InterPro" id="IPR001278">
    <property type="entry name" value="Arg-tRNA-ligase"/>
</dbReference>
<dbReference type="InterPro" id="IPR005148">
    <property type="entry name" value="Arg-tRNA-synth_N"/>
</dbReference>
<dbReference type="InterPro" id="IPR036695">
    <property type="entry name" value="Arg-tRNA-synth_N_sf"/>
</dbReference>
<dbReference type="InterPro" id="IPR035684">
    <property type="entry name" value="ArgRS_core"/>
</dbReference>
<dbReference type="InterPro" id="IPR008909">
    <property type="entry name" value="DALR_anticod-bd"/>
</dbReference>
<dbReference type="InterPro" id="IPR014729">
    <property type="entry name" value="Rossmann-like_a/b/a_fold"/>
</dbReference>
<dbReference type="InterPro" id="IPR009080">
    <property type="entry name" value="tRNAsynth_Ia_anticodon-bd"/>
</dbReference>
<dbReference type="NCBIfam" id="TIGR00456">
    <property type="entry name" value="argS"/>
    <property type="match status" value="1"/>
</dbReference>
<dbReference type="PANTHER" id="PTHR11956:SF5">
    <property type="entry name" value="ARGININE--TRNA LIGASE, CYTOPLASMIC"/>
    <property type="match status" value="1"/>
</dbReference>
<dbReference type="PANTHER" id="PTHR11956">
    <property type="entry name" value="ARGINYL-TRNA SYNTHETASE"/>
    <property type="match status" value="1"/>
</dbReference>
<dbReference type="Pfam" id="PF03485">
    <property type="entry name" value="Arg_tRNA_synt_N"/>
    <property type="match status" value="1"/>
</dbReference>
<dbReference type="Pfam" id="PF05746">
    <property type="entry name" value="DALR_1"/>
    <property type="match status" value="1"/>
</dbReference>
<dbReference type="Pfam" id="PF00750">
    <property type="entry name" value="tRNA-synt_1d"/>
    <property type="match status" value="2"/>
</dbReference>
<dbReference type="PRINTS" id="PR01038">
    <property type="entry name" value="TRNASYNTHARG"/>
</dbReference>
<dbReference type="SMART" id="SM01016">
    <property type="entry name" value="Arg_tRNA_synt_N"/>
    <property type="match status" value="1"/>
</dbReference>
<dbReference type="SMART" id="SM00836">
    <property type="entry name" value="DALR_1"/>
    <property type="match status" value="1"/>
</dbReference>
<dbReference type="SUPFAM" id="SSF47323">
    <property type="entry name" value="Anticodon-binding domain of a subclass of class I aminoacyl-tRNA synthetases"/>
    <property type="match status" value="1"/>
</dbReference>
<dbReference type="SUPFAM" id="SSF55190">
    <property type="entry name" value="Arginyl-tRNA synthetase (ArgRS), N-terminal 'additional' domain"/>
    <property type="match status" value="1"/>
</dbReference>
<dbReference type="SUPFAM" id="SSF52374">
    <property type="entry name" value="Nucleotidylyl transferase"/>
    <property type="match status" value="1"/>
</dbReference>
<dbReference type="PROSITE" id="PS00178">
    <property type="entry name" value="AA_TRNA_LIGASE_I"/>
    <property type="match status" value="1"/>
</dbReference>
<gene>
    <name evidence="1" type="primary">argS</name>
    <name type="ordered locus">Nham_1758</name>
</gene>
<proteinExistence type="inferred from homology"/>
<protein>
    <recommendedName>
        <fullName evidence="1">Arginine--tRNA ligase</fullName>
        <ecNumber evidence="1">6.1.1.19</ecNumber>
    </recommendedName>
    <alternativeName>
        <fullName evidence="1">Arginyl-tRNA synthetase</fullName>
        <shortName evidence="1">ArgRS</shortName>
    </alternativeName>
</protein>
<organism>
    <name type="scientific">Nitrobacter hamburgensis (strain DSM 10229 / NCIMB 13809 / X14)</name>
    <dbReference type="NCBI Taxonomy" id="323097"/>
    <lineage>
        <taxon>Bacteria</taxon>
        <taxon>Pseudomonadati</taxon>
        <taxon>Pseudomonadota</taxon>
        <taxon>Alphaproteobacteria</taxon>
        <taxon>Hyphomicrobiales</taxon>
        <taxon>Nitrobacteraceae</taxon>
        <taxon>Nitrobacter</taxon>
    </lineage>
</organism>
<name>SYR_NITHX</name>
<sequence>MTNPGPSRHLFADVLARVHAVCSALVEEGALPAGLDLSRIVVEPPREASHGDMATNAAMVLAKGAKSKPRDLAEKVAAKLRADGLIDKAEIAGPGFINLTLKPQVWSDALRTVLREGDGYGRSAIGAGEKVNVEYVSANPTGPMHVGHCRGAVFGDALASLLSFAGYGVTREYYINDAGAQVDVLARSAYLRYREALGQDIGEIPEGLYPGDYLKPVGQALAAEHGDSLLKAPEAEWLPVARAKAIAMMMEMIKGDLAALNIQHEVFFSERSLIEGGSDRVAATIDFLRAKGDVYEGRLPPPKGAPVEDYEDREQTLFRATAYGDDIDRPLKKSDGGYTYFASDIAYHKTKFDRGFLNMVDVWGADHGGYIKRVQAAIKAVTSGKATLDVKIVQLVKLLRNGEPVKMSKRSGDFVTLREVVDEVGSDAVRFMMLFRKNDAVLDFDLAKVIEQSKDNPVFYVQYGHARGFSIFRNAREAFPDLPEDASKRAAFLAAAAVERLTDPAELGLLRRLALYPRTVEAAALAHEPHRIAFYLYDLASEFHALWTKGRDMPHLRFIINNDAVITRARLALVQGVVSVLASGLAVLGVHAPNEMR</sequence>
<comment type="catalytic activity">
    <reaction evidence="1">
        <text>tRNA(Arg) + L-arginine + ATP = L-arginyl-tRNA(Arg) + AMP + diphosphate</text>
        <dbReference type="Rhea" id="RHEA:20301"/>
        <dbReference type="Rhea" id="RHEA-COMP:9658"/>
        <dbReference type="Rhea" id="RHEA-COMP:9673"/>
        <dbReference type="ChEBI" id="CHEBI:30616"/>
        <dbReference type="ChEBI" id="CHEBI:32682"/>
        <dbReference type="ChEBI" id="CHEBI:33019"/>
        <dbReference type="ChEBI" id="CHEBI:78442"/>
        <dbReference type="ChEBI" id="CHEBI:78513"/>
        <dbReference type="ChEBI" id="CHEBI:456215"/>
        <dbReference type="EC" id="6.1.1.19"/>
    </reaction>
</comment>
<comment type="subunit">
    <text evidence="1">Monomer.</text>
</comment>
<comment type="subcellular location">
    <subcellularLocation>
        <location evidence="1">Cytoplasm</location>
    </subcellularLocation>
</comment>
<comment type="similarity">
    <text evidence="1">Belongs to the class-I aminoacyl-tRNA synthetase family.</text>
</comment>